<name>PSIE_BACSU</name>
<proteinExistence type="inferred from homology"/>
<organism>
    <name type="scientific">Bacillus subtilis (strain 168)</name>
    <dbReference type="NCBI Taxonomy" id="224308"/>
    <lineage>
        <taxon>Bacteria</taxon>
        <taxon>Bacillati</taxon>
        <taxon>Bacillota</taxon>
        <taxon>Bacilli</taxon>
        <taxon>Bacillales</taxon>
        <taxon>Bacillaceae</taxon>
        <taxon>Bacillus</taxon>
    </lineage>
</organism>
<evidence type="ECO:0000255" key="1">
    <source>
        <dbReference type="HAMAP-Rule" id="MF_01048"/>
    </source>
</evidence>
<evidence type="ECO:0000305" key="2"/>
<gene>
    <name evidence="1" type="primary">psiE</name>
    <name type="synonym">yrkR</name>
    <name type="ordered locus">BSU26410</name>
</gene>
<sequence>MRFSNKFKKVPYLLQALLNVCLFFLALALSALLISETWYIVLFVYKSLFNKVDSYYEMLGELLIFFMYFEFIALIIKYFKSDFHFPLRYFIYIGITAVIRLIIIDHDQAISTFWWAMAILAMICGFFIANRRNSVVEH</sequence>
<comment type="subcellular location">
    <subcellularLocation>
        <location evidence="1">Cell membrane</location>
        <topology evidence="1">Multi-pass membrane protein</topology>
    </subcellularLocation>
</comment>
<comment type="similarity">
    <text evidence="1">Belongs to the PsiE family.</text>
</comment>
<comment type="sequence caution" evidence="2">
    <conflict type="erroneous initiation">
        <sequence resource="EMBL-CDS" id="BAA12373"/>
    </conflict>
</comment>
<keyword id="KW-1003">Cell membrane</keyword>
<keyword id="KW-0472">Membrane</keyword>
<keyword id="KW-1185">Reference proteome</keyword>
<keyword id="KW-0812">Transmembrane</keyword>
<keyword id="KW-1133">Transmembrane helix</keyword>
<reference key="1">
    <citation type="journal article" date="1996" name="Microbiology">
        <title>Systematic sequencing of the 283 kb 210 degrees-232 degrees region of the Bacillus subtilis genome containing the skin element and many sporulation genes.</title>
        <authorList>
            <person name="Mizuno M."/>
            <person name="Masuda S."/>
            <person name="Takemaru K."/>
            <person name="Hosono S."/>
            <person name="Sato T."/>
            <person name="Takeuchi M."/>
            <person name="Kobayashi Y."/>
        </authorList>
    </citation>
    <scope>NUCLEOTIDE SEQUENCE [GENOMIC DNA]</scope>
    <source>
        <strain>168 / JH642</strain>
    </source>
</reference>
<reference key="2">
    <citation type="journal article" date="1997" name="Nature">
        <title>The complete genome sequence of the Gram-positive bacterium Bacillus subtilis.</title>
        <authorList>
            <person name="Kunst F."/>
            <person name="Ogasawara N."/>
            <person name="Moszer I."/>
            <person name="Albertini A.M."/>
            <person name="Alloni G."/>
            <person name="Azevedo V."/>
            <person name="Bertero M.G."/>
            <person name="Bessieres P."/>
            <person name="Bolotin A."/>
            <person name="Borchert S."/>
            <person name="Borriss R."/>
            <person name="Boursier L."/>
            <person name="Brans A."/>
            <person name="Braun M."/>
            <person name="Brignell S.C."/>
            <person name="Bron S."/>
            <person name="Brouillet S."/>
            <person name="Bruschi C.V."/>
            <person name="Caldwell B."/>
            <person name="Capuano V."/>
            <person name="Carter N.M."/>
            <person name="Choi S.-K."/>
            <person name="Codani J.-J."/>
            <person name="Connerton I.F."/>
            <person name="Cummings N.J."/>
            <person name="Daniel R.A."/>
            <person name="Denizot F."/>
            <person name="Devine K.M."/>
            <person name="Duesterhoeft A."/>
            <person name="Ehrlich S.D."/>
            <person name="Emmerson P.T."/>
            <person name="Entian K.-D."/>
            <person name="Errington J."/>
            <person name="Fabret C."/>
            <person name="Ferrari E."/>
            <person name="Foulger D."/>
            <person name="Fritz C."/>
            <person name="Fujita M."/>
            <person name="Fujita Y."/>
            <person name="Fuma S."/>
            <person name="Galizzi A."/>
            <person name="Galleron N."/>
            <person name="Ghim S.-Y."/>
            <person name="Glaser P."/>
            <person name="Goffeau A."/>
            <person name="Golightly E.J."/>
            <person name="Grandi G."/>
            <person name="Guiseppi G."/>
            <person name="Guy B.J."/>
            <person name="Haga K."/>
            <person name="Haiech J."/>
            <person name="Harwood C.R."/>
            <person name="Henaut A."/>
            <person name="Hilbert H."/>
            <person name="Holsappel S."/>
            <person name="Hosono S."/>
            <person name="Hullo M.-F."/>
            <person name="Itaya M."/>
            <person name="Jones L.-M."/>
            <person name="Joris B."/>
            <person name="Karamata D."/>
            <person name="Kasahara Y."/>
            <person name="Klaerr-Blanchard M."/>
            <person name="Klein C."/>
            <person name="Kobayashi Y."/>
            <person name="Koetter P."/>
            <person name="Koningstein G."/>
            <person name="Krogh S."/>
            <person name="Kumano M."/>
            <person name="Kurita K."/>
            <person name="Lapidus A."/>
            <person name="Lardinois S."/>
            <person name="Lauber J."/>
            <person name="Lazarevic V."/>
            <person name="Lee S.-M."/>
            <person name="Levine A."/>
            <person name="Liu H."/>
            <person name="Masuda S."/>
            <person name="Mauel C."/>
            <person name="Medigue C."/>
            <person name="Medina N."/>
            <person name="Mellado R.P."/>
            <person name="Mizuno M."/>
            <person name="Moestl D."/>
            <person name="Nakai S."/>
            <person name="Noback M."/>
            <person name="Noone D."/>
            <person name="O'Reilly M."/>
            <person name="Ogawa K."/>
            <person name="Ogiwara A."/>
            <person name="Oudega B."/>
            <person name="Park S.-H."/>
            <person name="Parro V."/>
            <person name="Pohl T.M."/>
            <person name="Portetelle D."/>
            <person name="Porwollik S."/>
            <person name="Prescott A.M."/>
            <person name="Presecan E."/>
            <person name="Pujic P."/>
            <person name="Purnelle B."/>
            <person name="Rapoport G."/>
            <person name="Rey M."/>
            <person name="Reynolds S."/>
            <person name="Rieger M."/>
            <person name="Rivolta C."/>
            <person name="Rocha E."/>
            <person name="Roche B."/>
            <person name="Rose M."/>
            <person name="Sadaie Y."/>
            <person name="Sato T."/>
            <person name="Scanlan E."/>
            <person name="Schleich S."/>
            <person name="Schroeter R."/>
            <person name="Scoffone F."/>
            <person name="Sekiguchi J."/>
            <person name="Sekowska A."/>
            <person name="Seror S.J."/>
            <person name="Serror P."/>
            <person name="Shin B.-S."/>
            <person name="Soldo B."/>
            <person name="Sorokin A."/>
            <person name="Tacconi E."/>
            <person name="Takagi T."/>
            <person name="Takahashi H."/>
            <person name="Takemaru K."/>
            <person name="Takeuchi M."/>
            <person name="Tamakoshi A."/>
            <person name="Tanaka T."/>
            <person name="Terpstra P."/>
            <person name="Tognoni A."/>
            <person name="Tosato V."/>
            <person name="Uchiyama S."/>
            <person name="Vandenbol M."/>
            <person name="Vannier F."/>
            <person name="Vassarotti A."/>
            <person name="Viari A."/>
            <person name="Wambutt R."/>
            <person name="Wedler E."/>
            <person name="Wedler H."/>
            <person name="Weitzenegger T."/>
            <person name="Winters P."/>
            <person name="Wipat A."/>
            <person name="Yamamoto H."/>
            <person name="Yamane K."/>
            <person name="Yasumoto K."/>
            <person name="Yata K."/>
            <person name="Yoshida K."/>
            <person name="Yoshikawa H.-F."/>
            <person name="Zumstein E."/>
            <person name="Yoshikawa H."/>
            <person name="Danchin A."/>
        </authorList>
    </citation>
    <scope>NUCLEOTIDE SEQUENCE [LARGE SCALE GENOMIC DNA]</scope>
    <source>
        <strain>168</strain>
    </source>
</reference>
<reference key="3">
    <citation type="journal article" date="2009" name="Microbiology">
        <title>From a consortium sequence to a unified sequence: the Bacillus subtilis 168 reference genome a decade later.</title>
        <authorList>
            <person name="Barbe V."/>
            <person name="Cruveiller S."/>
            <person name="Kunst F."/>
            <person name="Lenoble P."/>
            <person name="Meurice G."/>
            <person name="Sekowska A."/>
            <person name="Vallenet D."/>
            <person name="Wang T."/>
            <person name="Moszer I."/>
            <person name="Medigue C."/>
            <person name="Danchin A."/>
        </authorList>
    </citation>
    <scope>SEQUENCE REVISION TO 23</scope>
</reference>
<feature type="chain" id="PRO_0000160282" description="Protein PsiE homolog">
    <location>
        <begin position="1"/>
        <end position="138"/>
    </location>
</feature>
<feature type="transmembrane region" description="Helical" evidence="1">
    <location>
        <begin position="12"/>
        <end position="34"/>
    </location>
</feature>
<feature type="transmembrane region" description="Helical" evidence="1">
    <location>
        <begin position="56"/>
        <end position="76"/>
    </location>
</feature>
<feature type="transmembrane region" description="Helical" evidence="1">
    <location>
        <begin position="84"/>
        <end position="104"/>
    </location>
</feature>
<feature type="transmembrane region" description="Helical" evidence="1">
    <location>
        <begin position="109"/>
        <end position="129"/>
    </location>
</feature>
<feature type="sequence conflict" description="In Ref. 1; BAA12373." evidence="2" ref="1">
    <original>F</original>
    <variation>S</variation>
    <location>
        <position position="23"/>
    </location>
</feature>
<protein>
    <recommendedName>
        <fullName evidence="1">Protein PsiE homolog</fullName>
    </recommendedName>
</protein>
<dbReference type="EMBL" id="D84432">
    <property type="protein sequence ID" value="BAA12373.1"/>
    <property type="status" value="ALT_INIT"/>
    <property type="molecule type" value="Genomic_DNA"/>
</dbReference>
<dbReference type="EMBL" id="AL009126">
    <property type="protein sequence ID" value="CAB14582.2"/>
    <property type="molecule type" value="Genomic_DNA"/>
</dbReference>
<dbReference type="PIR" id="H69977">
    <property type="entry name" value="H69977"/>
</dbReference>
<dbReference type="RefSeq" id="NP_390518.2">
    <property type="nucleotide sequence ID" value="NC_000964.3"/>
</dbReference>
<dbReference type="RefSeq" id="WP_003246154.1">
    <property type="nucleotide sequence ID" value="NZ_OZ025638.1"/>
</dbReference>
<dbReference type="SMR" id="P54445"/>
<dbReference type="FunCoup" id="P54445">
    <property type="interactions" value="7"/>
</dbReference>
<dbReference type="STRING" id="224308.BSU26410"/>
<dbReference type="PaxDb" id="224308-BSU26410"/>
<dbReference type="EnsemblBacteria" id="CAB14582">
    <property type="protein sequence ID" value="CAB14582"/>
    <property type="gene ID" value="BSU_26410"/>
</dbReference>
<dbReference type="GeneID" id="937665"/>
<dbReference type="KEGG" id="bsu:BSU26410"/>
<dbReference type="PATRIC" id="fig|224308.43.peg.2753"/>
<dbReference type="eggNOG" id="COG3223">
    <property type="taxonomic scope" value="Bacteria"/>
</dbReference>
<dbReference type="InParanoid" id="P54445"/>
<dbReference type="OrthoDB" id="9792470at2"/>
<dbReference type="PhylomeDB" id="P54445"/>
<dbReference type="BioCyc" id="BSUB:BSU26410-MONOMER"/>
<dbReference type="Proteomes" id="UP000001570">
    <property type="component" value="Chromosome"/>
</dbReference>
<dbReference type="GO" id="GO:0005886">
    <property type="term" value="C:plasma membrane"/>
    <property type="evidence" value="ECO:0000318"/>
    <property type="project" value="GO_Central"/>
</dbReference>
<dbReference type="GO" id="GO:0016036">
    <property type="term" value="P:cellular response to phosphate starvation"/>
    <property type="evidence" value="ECO:0007669"/>
    <property type="project" value="InterPro"/>
</dbReference>
<dbReference type="HAMAP" id="MF_01048">
    <property type="entry name" value="PsiE"/>
    <property type="match status" value="1"/>
</dbReference>
<dbReference type="InterPro" id="IPR009315">
    <property type="entry name" value="P_starv_induced_PsiE"/>
</dbReference>
<dbReference type="InterPro" id="IPR020948">
    <property type="entry name" value="P_starv_induced_PsiE-like"/>
</dbReference>
<dbReference type="NCBIfam" id="NF002765">
    <property type="entry name" value="PRK02833.1-3"/>
    <property type="match status" value="1"/>
</dbReference>
<dbReference type="PANTHER" id="PTHR37819">
    <property type="entry name" value="PROTEIN PSIE"/>
    <property type="match status" value="1"/>
</dbReference>
<dbReference type="PANTHER" id="PTHR37819:SF1">
    <property type="entry name" value="PROTEIN PSIE"/>
    <property type="match status" value="1"/>
</dbReference>
<dbReference type="Pfam" id="PF06146">
    <property type="entry name" value="PsiE"/>
    <property type="match status" value="1"/>
</dbReference>
<dbReference type="PIRSF" id="PIRSF029598">
    <property type="entry name" value="PsiE"/>
    <property type="match status" value="1"/>
</dbReference>
<accession>P54445</accession>